<reference key="1">
    <citation type="submission" date="2007-08" db="EMBL/GenBank/DDBJ databases">
        <authorList>
            <consortium name="The Citrobacter koseri Genome Sequencing Project"/>
            <person name="McClelland M."/>
            <person name="Sanderson E.K."/>
            <person name="Porwollik S."/>
            <person name="Spieth J."/>
            <person name="Clifton W.S."/>
            <person name="Latreille P."/>
            <person name="Courtney L."/>
            <person name="Wang C."/>
            <person name="Pepin K."/>
            <person name="Bhonagiri V."/>
            <person name="Nash W."/>
            <person name="Johnson M."/>
            <person name="Thiruvilangam P."/>
            <person name="Wilson R."/>
        </authorList>
    </citation>
    <scope>NUCLEOTIDE SEQUENCE [LARGE SCALE GENOMIC DNA]</scope>
    <source>
        <strain>ATCC BAA-895 / CDC 4225-83 / SGSC4696</strain>
    </source>
</reference>
<keyword id="KW-1185">Reference proteome</keyword>
<protein>
    <recommendedName>
        <fullName evidence="1">UPF0301 protein CKO_04323</fullName>
    </recommendedName>
</protein>
<name>Y4323_CITK8</name>
<gene>
    <name type="ordered locus">CKO_04323</name>
</gene>
<organism>
    <name type="scientific">Citrobacter koseri (strain ATCC BAA-895 / CDC 4225-83 / SGSC4696)</name>
    <dbReference type="NCBI Taxonomy" id="290338"/>
    <lineage>
        <taxon>Bacteria</taxon>
        <taxon>Pseudomonadati</taxon>
        <taxon>Pseudomonadota</taxon>
        <taxon>Gammaproteobacteria</taxon>
        <taxon>Enterobacterales</taxon>
        <taxon>Enterobacteriaceae</taxon>
        <taxon>Citrobacter</taxon>
    </lineage>
</organism>
<sequence length="187" mass="20712">MNLQHHFLIAMPALQDPIFRRSVVYICEHNEDGAMGIIINKPLENLQIEGILEKLKITPEPRDPAIRLDKAVMLGGPLAEDRGFILHTPPSRFSSSIRISDNTVITTSRDVLETLGTPEQPSEVLVALGYSSWDKGQLEQELMDNAWLTAPADLNILFKTPIADRWRDAAKLIGIDILTMPGVAGHA</sequence>
<feature type="chain" id="PRO_1000046652" description="UPF0301 protein CKO_04323">
    <location>
        <begin position="1"/>
        <end position="187"/>
    </location>
</feature>
<accession>A8APG7</accession>
<dbReference type="EMBL" id="CP000822">
    <property type="protein sequence ID" value="ABV15380.1"/>
    <property type="molecule type" value="Genomic_DNA"/>
</dbReference>
<dbReference type="RefSeq" id="WP_012135063.1">
    <property type="nucleotide sequence ID" value="NC_009792.1"/>
</dbReference>
<dbReference type="SMR" id="A8APG7"/>
<dbReference type="STRING" id="290338.CKO_04323"/>
<dbReference type="GeneID" id="45137914"/>
<dbReference type="KEGG" id="cko:CKO_04323"/>
<dbReference type="HOGENOM" id="CLU_057596_1_0_6"/>
<dbReference type="OrthoDB" id="9807486at2"/>
<dbReference type="Proteomes" id="UP000008148">
    <property type="component" value="Chromosome"/>
</dbReference>
<dbReference type="GO" id="GO:0005829">
    <property type="term" value="C:cytosol"/>
    <property type="evidence" value="ECO:0007669"/>
    <property type="project" value="TreeGrafter"/>
</dbReference>
<dbReference type="Gene3D" id="3.40.1740.10">
    <property type="entry name" value="VC0467-like"/>
    <property type="match status" value="1"/>
</dbReference>
<dbReference type="Gene3D" id="3.30.70.1300">
    <property type="entry name" value="VC0467-like domains"/>
    <property type="match status" value="1"/>
</dbReference>
<dbReference type="HAMAP" id="MF_00758">
    <property type="entry name" value="UPF0301"/>
    <property type="match status" value="1"/>
</dbReference>
<dbReference type="InterPro" id="IPR003774">
    <property type="entry name" value="AlgH-like"/>
</dbReference>
<dbReference type="NCBIfam" id="NF001266">
    <property type="entry name" value="PRK00228.1-1"/>
    <property type="match status" value="1"/>
</dbReference>
<dbReference type="PANTHER" id="PTHR30327">
    <property type="entry name" value="UNCHARACTERIZED PROTEIN YQGE"/>
    <property type="match status" value="1"/>
</dbReference>
<dbReference type="PANTHER" id="PTHR30327:SF1">
    <property type="entry name" value="UPF0301 PROTEIN YQGE"/>
    <property type="match status" value="1"/>
</dbReference>
<dbReference type="Pfam" id="PF02622">
    <property type="entry name" value="DUF179"/>
    <property type="match status" value="1"/>
</dbReference>
<dbReference type="SUPFAM" id="SSF143456">
    <property type="entry name" value="VC0467-like"/>
    <property type="match status" value="1"/>
</dbReference>
<comment type="similarity">
    <text evidence="1">Belongs to the UPF0301 (AlgH) family.</text>
</comment>
<proteinExistence type="inferred from homology"/>
<evidence type="ECO:0000255" key="1">
    <source>
        <dbReference type="HAMAP-Rule" id="MF_00758"/>
    </source>
</evidence>